<evidence type="ECO:0000255" key="1">
    <source>
        <dbReference type="HAMAP-Rule" id="MF_01726"/>
    </source>
</evidence>
<sequence>MDNCILEIKNLSHYYDNNGNKTLDNINLKIKKNEFITLLGPSGCGKTTLIKILGGFLSQKNGEIYFLSKEISKTNPNKREINTVFQNYALFPHMNVFDNISFGLRMKKTPKDTIKEKVKTSLSLIGMPKYAYRNINELSGGQKQRVAIARAMVMEPKLLLLDEPLSALDLKMRQEMQKELKKIQRQLGITFIYVTHDQEEALTMSDRIVVMNEGIILQVGTPEEIYNEPKTKFVADFIGESNIFDGTYKKELVVSLLGHEFECLDKGFEAEEAVDLVIRPEDIKLLPKGKGHLSGTITSAIFQGVHYEMTLEIQKTNWIVQSTRLTKVGEEVDIFLEPDDIHVMHKE</sequence>
<name>POTA_BORAP</name>
<feature type="chain" id="PRO_0000286200" description="Spermidine/putrescine import ATP-binding protein PotA">
    <location>
        <begin position="1"/>
        <end position="347"/>
    </location>
</feature>
<feature type="domain" description="ABC transporter" evidence="1">
    <location>
        <begin position="6"/>
        <end position="238"/>
    </location>
</feature>
<feature type="binding site" evidence="1">
    <location>
        <begin position="40"/>
        <end position="47"/>
    </location>
    <ligand>
        <name>ATP</name>
        <dbReference type="ChEBI" id="CHEBI:30616"/>
    </ligand>
</feature>
<comment type="function">
    <text evidence="1">Part of the ABC transporter complex PotABCD involved in spermidine/putrescine import. Responsible for energy coupling to the transport system.</text>
</comment>
<comment type="catalytic activity">
    <reaction evidence="1">
        <text>ATP + H2O + polyamine-[polyamine-binding protein]Side 1 = ADP + phosphate + polyamineSide 2 + [polyamine-binding protein]Side 1.</text>
        <dbReference type="EC" id="7.6.2.11"/>
    </reaction>
</comment>
<comment type="subunit">
    <text evidence="1">The complex is composed of two ATP-binding proteins (PotA), two transmembrane proteins (PotB and PotC) and a solute-binding protein (PotD).</text>
</comment>
<comment type="subcellular location">
    <subcellularLocation>
        <location evidence="1">Cell inner membrane</location>
        <topology evidence="1">Peripheral membrane protein</topology>
    </subcellularLocation>
</comment>
<comment type="similarity">
    <text evidence="1">Belongs to the ABC transporter superfamily. Spermidine/putrescine importer (TC 3.A.1.11.1) family.</text>
</comment>
<keyword id="KW-0067">ATP-binding</keyword>
<keyword id="KW-0997">Cell inner membrane</keyword>
<keyword id="KW-1003">Cell membrane</keyword>
<keyword id="KW-0472">Membrane</keyword>
<keyword id="KW-0547">Nucleotide-binding</keyword>
<keyword id="KW-1278">Translocase</keyword>
<keyword id="KW-0813">Transport</keyword>
<reference key="1">
    <citation type="journal article" date="2006" name="BMC Genomics">
        <title>Comparative genome analysis: selection pressure on the Borrelia vls cassettes is essential for infectivity.</title>
        <authorList>
            <person name="Gloeckner G."/>
            <person name="Schulte-Spechtel U."/>
            <person name="Schilhabel M."/>
            <person name="Felder M."/>
            <person name="Suehnel J."/>
            <person name="Wilske B."/>
            <person name="Platzer M."/>
        </authorList>
    </citation>
    <scope>NUCLEOTIDE SEQUENCE [LARGE SCALE GENOMIC DNA]</scope>
    <source>
        <strain>PKo</strain>
    </source>
</reference>
<reference key="2">
    <citation type="journal article" date="2011" name="J. Bacteriol.">
        <title>Whole-genome sequences of two Borrelia afzelii and two Borrelia garinii Lyme disease agent isolates.</title>
        <authorList>
            <person name="Casjens S.R."/>
            <person name="Mongodin E.F."/>
            <person name="Qiu W.G."/>
            <person name="Dunn J.J."/>
            <person name="Luft B.J."/>
            <person name="Fraser-Liggett C.M."/>
            <person name="Schutzer S.E."/>
        </authorList>
    </citation>
    <scope>NUCLEOTIDE SEQUENCE [LARGE SCALE GENOMIC DNA]</scope>
    <source>
        <strain>PKo</strain>
    </source>
</reference>
<organism>
    <name type="scientific">Borreliella afzelii (strain PKo)</name>
    <name type="common">Borrelia afzelii</name>
    <dbReference type="NCBI Taxonomy" id="390236"/>
    <lineage>
        <taxon>Bacteria</taxon>
        <taxon>Pseudomonadati</taxon>
        <taxon>Spirochaetota</taxon>
        <taxon>Spirochaetia</taxon>
        <taxon>Spirochaetales</taxon>
        <taxon>Borreliaceae</taxon>
        <taxon>Borreliella</taxon>
    </lineage>
</organism>
<proteinExistence type="inferred from homology"/>
<protein>
    <recommendedName>
        <fullName evidence="1">Spermidine/putrescine import ATP-binding protein PotA</fullName>
        <ecNumber evidence="1">7.6.2.11</ecNumber>
    </recommendedName>
</protein>
<accession>Q0SML1</accession>
<accession>G0IQJ2</accession>
<gene>
    <name evidence="1" type="primary">potA</name>
    <name type="ordered locus">BAPKO_0686</name>
    <name type="ordered locus">BafPKo_0666</name>
</gene>
<dbReference type="EC" id="7.6.2.11" evidence="1"/>
<dbReference type="EMBL" id="CP000395">
    <property type="protein sequence ID" value="ABH01917.1"/>
    <property type="molecule type" value="Genomic_DNA"/>
</dbReference>
<dbReference type="EMBL" id="CP002933">
    <property type="protein sequence ID" value="AEL69862.1"/>
    <property type="molecule type" value="Genomic_DNA"/>
</dbReference>
<dbReference type="RefSeq" id="WP_004789939.1">
    <property type="nucleotide sequence ID" value="NZ_CP160066.1"/>
</dbReference>
<dbReference type="SMR" id="Q0SML1"/>
<dbReference type="STRING" id="29518.BLA32_01025"/>
<dbReference type="KEGG" id="baf:BAPKO_0686"/>
<dbReference type="KEGG" id="bafz:BafPKo_0666"/>
<dbReference type="PATRIC" id="fig|390236.22.peg.635"/>
<dbReference type="eggNOG" id="COG3842">
    <property type="taxonomic scope" value="Bacteria"/>
</dbReference>
<dbReference type="HOGENOM" id="CLU_000604_1_1_12"/>
<dbReference type="OrthoDB" id="9802264at2"/>
<dbReference type="Proteomes" id="UP000005216">
    <property type="component" value="Chromosome"/>
</dbReference>
<dbReference type="GO" id="GO:0043190">
    <property type="term" value="C:ATP-binding cassette (ABC) transporter complex"/>
    <property type="evidence" value="ECO:0007669"/>
    <property type="project" value="InterPro"/>
</dbReference>
<dbReference type="GO" id="GO:0015417">
    <property type="term" value="F:ABC-type polyamine transporter activity"/>
    <property type="evidence" value="ECO:0007669"/>
    <property type="project" value="UniProtKB-EC"/>
</dbReference>
<dbReference type="GO" id="GO:0005524">
    <property type="term" value="F:ATP binding"/>
    <property type="evidence" value="ECO:0007669"/>
    <property type="project" value="UniProtKB-KW"/>
</dbReference>
<dbReference type="GO" id="GO:0016887">
    <property type="term" value="F:ATP hydrolysis activity"/>
    <property type="evidence" value="ECO:0007669"/>
    <property type="project" value="InterPro"/>
</dbReference>
<dbReference type="FunFam" id="3.40.50.300:FF:000133">
    <property type="entry name" value="Spermidine/putrescine import ATP-binding protein PotA"/>
    <property type="match status" value="1"/>
</dbReference>
<dbReference type="Gene3D" id="2.40.50.100">
    <property type="match status" value="1"/>
</dbReference>
<dbReference type="Gene3D" id="2.40.50.140">
    <property type="entry name" value="Nucleic acid-binding proteins"/>
    <property type="match status" value="1"/>
</dbReference>
<dbReference type="Gene3D" id="3.40.50.300">
    <property type="entry name" value="P-loop containing nucleotide triphosphate hydrolases"/>
    <property type="match status" value="1"/>
</dbReference>
<dbReference type="InterPro" id="IPR003593">
    <property type="entry name" value="AAA+_ATPase"/>
</dbReference>
<dbReference type="InterPro" id="IPR050093">
    <property type="entry name" value="ABC_SmlMolc_Importer"/>
</dbReference>
<dbReference type="InterPro" id="IPR003439">
    <property type="entry name" value="ABC_transporter-like_ATP-bd"/>
</dbReference>
<dbReference type="InterPro" id="IPR017871">
    <property type="entry name" value="ABC_transporter-like_CS"/>
</dbReference>
<dbReference type="InterPro" id="IPR008995">
    <property type="entry name" value="Mo/tungstate-bd_C_term_dom"/>
</dbReference>
<dbReference type="InterPro" id="IPR012340">
    <property type="entry name" value="NA-bd_OB-fold"/>
</dbReference>
<dbReference type="InterPro" id="IPR027417">
    <property type="entry name" value="P-loop_NTPase"/>
</dbReference>
<dbReference type="InterPro" id="IPR005893">
    <property type="entry name" value="PotA-like"/>
</dbReference>
<dbReference type="InterPro" id="IPR013611">
    <property type="entry name" value="Transp-assoc_OB_typ2"/>
</dbReference>
<dbReference type="NCBIfam" id="TIGR01187">
    <property type="entry name" value="potA"/>
    <property type="match status" value="1"/>
</dbReference>
<dbReference type="PANTHER" id="PTHR42781">
    <property type="entry name" value="SPERMIDINE/PUTRESCINE IMPORT ATP-BINDING PROTEIN POTA"/>
    <property type="match status" value="1"/>
</dbReference>
<dbReference type="PANTHER" id="PTHR42781:SF4">
    <property type="entry name" value="SPERMIDINE_PUTRESCINE IMPORT ATP-BINDING PROTEIN POTA"/>
    <property type="match status" value="1"/>
</dbReference>
<dbReference type="Pfam" id="PF00005">
    <property type="entry name" value="ABC_tran"/>
    <property type="match status" value="1"/>
</dbReference>
<dbReference type="Pfam" id="PF08402">
    <property type="entry name" value="TOBE_2"/>
    <property type="match status" value="1"/>
</dbReference>
<dbReference type="SMART" id="SM00382">
    <property type="entry name" value="AAA"/>
    <property type="match status" value="1"/>
</dbReference>
<dbReference type="SUPFAM" id="SSF50331">
    <property type="entry name" value="MOP-like"/>
    <property type="match status" value="1"/>
</dbReference>
<dbReference type="SUPFAM" id="SSF52540">
    <property type="entry name" value="P-loop containing nucleoside triphosphate hydrolases"/>
    <property type="match status" value="1"/>
</dbReference>
<dbReference type="PROSITE" id="PS00211">
    <property type="entry name" value="ABC_TRANSPORTER_1"/>
    <property type="match status" value="1"/>
</dbReference>
<dbReference type="PROSITE" id="PS50893">
    <property type="entry name" value="ABC_TRANSPORTER_2"/>
    <property type="match status" value="1"/>
</dbReference>
<dbReference type="PROSITE" id="PS51305">
    <property type="entry name" value="POTA"/>
    <property type="match status" value="1"/>
</dbReference>